<feature type="chain" id="PRO_0000456649" description="CDP-diacylglycerol--inositol 3-phosphatidyltransferase">
    <location>
        <begin position="1"/>
        <end position="230"/>
    </location>
</feature>
<feature type="topological domain" description="Cytoplasmic" evidence="8">
    <location>
        <begin position="1"/>
        <end position="28"/>
    </location>
</feature>
<feature type="transmembrane region" description="Helical" evidence="2">
    <location>
        <begin position="29"/>
        <end position="51"/>
    </location>
</feature>
<feature type="topological domain" description="Lumenal" evidence="8">
    <location>
        <begin position="52"/>
        <end position="57"/>
    </location>
</feature>
<feature type="transmembrane region" description="Helical" evidence="2">
    <location>
        <begin position="58"/>
        <end position="77"/>
    </location>
</feature>
<feature type="topological domain" description="Cytoplasmic" evidence="8">
    <location>
        <begin position="78"/>
        <end position="89"/>
    </location>
</feature>
<feature type="transmembrane region" description="Helical" evidence="8">
    <location>
        <begin position="90"/>
        <end position="110"/>
    </location>
</feature>
<feature type="topological domain" description="Lumenal" evidence="8">
    <location>
        <begin position="111"/>
        <end position="112"/>
    </location>
</feature>
<feature type="transmembrane region" description="Helical" evidence="8">
    <location>
        <begin position="113"/>
        <end position="133"/>
    </location>
</feature>
<feature type="topological domain" description="Cytoplasmic" evidence="8">
    <location>
        <begin position="134"/>
        <end position="161"/>
    </location>
</feature>
<feature type="transmembrane region" description="Helical" evidence="2">
    <location>
        <begin position="162"/>
        <end position="182"/>
    </location>
</feature>
<feature type="topological domain" description="Lumenal" evidence="8">
    <location>
        <begin position="183"/>
        <end position="184"/>
    </location>
</feature>
<feature type="transmembrane region" description="Helical" evidence="2">
    <location>
        <begin position="185"/>
        <end position="205"/>
    </location>
</feature>
<feature type="topological domain" description="Cytoplasmic" evidence="8">
    <location>
        <begin position="206"/>
        <end position="230"/>
    </location>
</feature>
<feature type="active site" description="Proton acceptor" evidence="1">
    <location>
        <position position="95"/>
    </location>
</feature>
<feature type="binding site" evidence="1">
    <location>
        <position position="70"/>
    </location>
    <ligand>
        <name>Mg(2+)</name>
        <dbReference type="ChEBI" id="CHEBI:18420"/>
        <label>1</label>
    </ligand>
</feature>
<feature type="binding site" evidence="1">
    <location>
        <position position="70"/>
    </location>
    <ligand>
        <name>Mg(2+)</name>
        <dbReference type="ChEBI" id="CHEBI:18420"/>
        <label>2</label>
    </ligand>
</feature>
<feature type="binding site" evidence="1">
    <location>
        <position position="73"/>
    </location>
    <ligand>
        <name>Mg(2+)</name>
        <dbReference type="ChEBI" id="CHEBI:18420"/>
        <label>1</label>
    </ligand>
</feature>
<feature type="binding site" evidence="1">
    <location>
        <position position="74"/>
    </location>
    <ligand>
        <name>a CDP-1,2-diacyl-sn-glycerol</name>
        <dbReference type="ChEBI" id="CHEBI:58332"/>
    </ligand>
</feature>
<feature type="binding site" evidence="1">
    <location>
        <position position="78"/>
    </location>
    <ligand>
        <name>a CDP-1,2-diacyl-sn-glycerol</name>
        <dbReference type="ChEBI" id="CHEBI:58332"/>
    </ligand>
</feature>
<feature type="binding site" evidence="1">
    <location>
        <position position="84"/>
    </location>
    <ligand>
        <name>a CDP-1,2-diacyl-sn-glycerol</name>
        <dbReference type="ChEBI" id="CHEBI:58332"/>
    </ligand>
</feature>
<feature type="binding site" evidence="1">
    <location>
        <position position="91"/>
    </location>
    <ligand>
        <name>Mg(2+)</name>
        <dbReference type="ChEBI" id="CHEBI:18420"/>
        <label>1</label>
    </ligand>
</feature>
<feature type="binding site" evidence="1">
    <location>
        <position position="91"/>
    </location>
    <ligand>
        <name>Mg(2+)</name>
        <dbReference type="ChEBI" id="CHEBI:18420"/>
        <label>2</label>
    </ligand>
</feature>
<feature type="binding site" evidence="1">
    <location>
        <position position="95"/>
    </location>
    <ligand>
        <name>Mg(2+)</name>
        <dbReference type="ChEBI" id="CHEBI:18420"/>
        <label>2</label>
    </ligand>
</feature>
<proteinExistence type="evidence at protein level"/>
<keyword id="KW-0256">Endoplasmic reticulum</keyword>
<keyword id="KW-0444">Lipid biosynthesis</keyword>
<keyword id="KW-0443">Lipid metabolism</keyword>
<keyword id="KW-0460">Magnesium</keyword>
<keyword id="KW-0464">Manganese</keyword>
<keyword id="KW-0472">Membrane</keyword>
<keyword id="KW-0479">Metal-binding</keyword>
<keyword id="KW-0594">Phospholipid biosynthesis</keyword>
<keyword id="KW-1208">Phospholipid metabolism</keyword>
<keyword id="KW-1185">Reference proteome</keyword>
<keyword id="KW-0808">Transferase</keyword>
<keyword id="KW-0812">Transmembrane</keyword>
<keyword id="KW-1133">Transmembrane helix</keyword>
<organism evidence="12">
    <name type="scientific">Candida albicans (strain SC5314 / ATCC MYA-2876)</name>
    <name type="common">Yeast</name>
    <dbReference type="NCBI Taxonomy" id="237561"/>
    <lineage>
        <taxon>Eukaryota</taxon>
        <taxon>Fungi</taxon>
        <taxon>Dikarya</taxon>
        <taxon>Ascomycota</taxon>
        <taxon>Saccharomycotina</taxon>
        <taxon>Pichiomycetes</taxon>
        <taxon>Debaryomycetaceae</taxon>
        <taxon>Candida/Lodderomyces clade</taxon>
        <taxon>Candida</taxon>
    </lineage>
</organism>
<dbReference type="EC" id="2.7.8.11" evidence="5"/>
<dbReference type="EMBL" id="CP017626">
    <property type="protein sequence ID" value="AOW29260.1"/>
    <property type="molecule type" value="Genomic_DNA"/>
</dbReference>
<dbReference type="RefSeq" id="XP_712248.1">
    <property type="nucleotide sequence ID" value="XM_707155.1"/>
</dbReference>
<dbReference type="SMR" id="Q59RA2"/>
<dbReference type="FunCoup" id="Q59RA2">
    <property type="interactions" value="672"/>
</dbReference>
<dbReference type="STRING" id="237561.Q59RA2"/>
<dbReference type="EnsemblFungi" id="C4_05210W_A-T">
    <property type="protein sequence ID" value="C4_05210W_A-T-p1"/>
    <property type="gene ID" value="C4_05210W_A"/>
</dbReference>
<dbReference type="GeneID" id="3646154"/>
<dbReference type="KEGG" id="cal:CAALFM_C405210WA"/>
<dbReference type="CGD" id="CAL0000175849">
    <property type="gene designation" value="PIS1"/>
</dbReference>
<dbReference type="VEuPathDB" id="FungiDB:C4_05210W_A"/>
<dbReference type="eggNOG" id="KOG3240">
    <property type="taxonomic scope" value="Eukaryota"/>
</dbReference>
<dbReference type="HOGENOM" id="CLU_067602_0_0_1"/>
<dbReference type="InParanoid" id="Q59RA2"/>
<dbReference type="OMA" id="VTGVFFY"/>
<dbReference type="OrthoDB" id="10251079at2759"/>
<dbReference type="Proteomes" id="UP000000559">
    <property type="component" value="Chromosome 4"/>
</dbReference>
<dbReference type="GO" id="GO:0005783">
    <property type="term" value="C:endoplasmic reticulum"/>
    <property type="evidence" value="ECO:0000314"/>
    <property type="project" value="CGD"/>
</dbReference>
<dbReference type="GO" id="GO:0005789">
    <property type="term" value="C:endoplasmic reticulum membrane"/>
    <property type="evidence" value="ECO:0000314"/>
    <property type="project" value="UniProtKB"/>
</dbReference>
<dbReference type="GO" id="GO:0005794">
    <property type="term" value="C:Golgi apparatus"/>
    <property type="evidence" value="ECO:0000318"/>
    <property type="project" value="GO_Central"/>
</dbReference>
<dbReference type="GO" id="GO:0003881">
    <property type="term" value="F:CDP-diacylglycerol-inositol 3-phosphatidyltransferase activity"/>
    <property type="evidence" value="ECO:0000314"/>
    <property type="project" value="UniProtKB"/>
</dbReference>
<dbReference type="GO" id="GO:0046872">
    <property type="term" value="F:metal ion binding"/>
    <property type="evidence" value="ECO:0007669"/>
    <property type="project" value="UniProtKB-KW"/>
</dbReference>
<dbReference type="GO" id="GO:0006661">
    <property type="term" value="P:phosphatidylinositol biosynthetic process"/>
    <property type="evidence" value="ECO:0000314"/>
    <property type="project" value="UniProtKB"/>
</dbReference>
<dbReference type="FunFam" id="1.20.120.1760:FF:000021">
    <property type="entry name" value="CDP-diacylglycerol--inositol 3-phosphatidyltransferase"/>
    <property type="match status" value="1"/>
</dbReference>
<dbReference type="Gene3D" id="1.20.120.1760">
    <property type="match status" value="1"/>
</dbReference>
<dbReference type="InterPro" id="IPR000462">
    <property type="entry name" value="CDP-OH_P_trans"/>
</dbReference>
<dbReference type="InterPro" id="IPR043130">
    <property type="entry name" value="CDP-OH_PTrfase_TM_dom"/>
</dbReference>
<dbReference type="InterPro" id="IPR048254">
    <property type="entry name" value="CDP_ALCOHOL_P_TRANSF_CS"/>
</dbReference>
<dbReference type="InterPro" id="IPR014387">
    <property type="entry name" value="CDP_diag_ino_3_P_euk"/>
</dbReference>
<dbReference type="PANTHER" id="PTHR15362:SF4">
    <property type="entry name" value="CDP-DIACYLGLYCEROL--INOSITOL 3-PHOSPHATIDYLTRANSFERASE"/>
    <property type="match status" value="1"/>
</dbReference>
<dbReference type="PANTHER" id="PTHR15362">
    <property type="entry name" value="PHOSPHATIDYLINOSITOL SYNTHASE"/>
    <property type="match status" value="1"/>
</dbReference>
<dbReference type="Pfam" id="PF01066">
    <property type="entry name" value="CDP-OH_P_transf"/>
    <property type="match status" value="1"/>
</dbReference>
<dbReference type="PIRSF" id="PIRSF000848">
    <property type="entry name" value="CDP_diag_ino_3_P"/>
    <property type="match status" value="1"/>
</dbReference>
<dbReference type="PROSITE" id="PS00379">
    <property type="entry name" value="CDP_ALCOHOL_P_TRANSF"/>
    <property type="match status" value="1"/>
</dbReference>
<evidence type="ECO:0000250" key="1">
    <source>
        <dbReference type="UniProtKB" id="P9WPG7"/>
    </source>
</evidence>
<evidence type="ECO:0000255" key="2"/>
<evidence type="ECO:0000255" key="3">
    <source>
        <dbReference type="PIRNR" id="PIRNR000848"/>
    </source>
</evidence>
<evidence type="ECO:0000269" key="4">
    <source>
    </source>
</evidence>
<evidence type="ECO:0000269" key="5">
    <source>
    </source>
</evidence>
<evidence type="ECO:0000303" key="6">
    <source>
    </source>
</evidence>
<evidence type="ECO:0000303" key="7">
    <source>
    </source>
</evidence>
<evidence type="ECO:0000305" key="8"/>
<evidence type="ECO:0000305" key="9">
    <source>
    </source>
</evidence>
<evidence type="ECO:0000312" key="10">
    <source>
        <dbReference type="CGD" id="CAL0000175849"/>
    </source>
</evidence>
<evidence type="ECO:0000312" key="11">
    <source>
        <dbReference type="EMBL" id="AOW29260.1"/>
    </source>
</evidence>
<evidence type="ECO:0000312" key="12">
    <source>
        <dbReference type="Proteomes" id="UP000000559"/>
    </source>
</evidence>
<name>PIS_CANAL</name>
<reference evidence="12" key="1">
    <citation type="journal article" date="2004" name="Proc. Natl. Acad. Sci. U.S.A.">
        <title>The diploid genome sequence of Candida albicans.</title>
        <authorList>
            <person name="Jones T."/>
            <person name="Federspiel N.A."/>
            <person name="Chibana H."/>
            <person name="Dungan J."/>
            <person name="Kalman S."/>
            <person name="Magee B.B."/>
            <person name="Newport G."/>
            <person name="Thorstenson Y.R."/>
            <person name="Agabian N."/>
            <person name="Magee P.T."/>
            <person name="Davis R.W."/>
            <person name="Scherer S."/>
        </authorList>
    </citation>
    <scope>NUCLEOTIDE SEQUENCE [LARGE SCALE GENOMIC DNA]</scope>
    <source>
        <strain>SC5314 / ATCC MYA-2876</strain>
    </source>
</reference>
<reference evidence="12" key="2">
    <citation type="journal article" date="2007" name="Genome Biol.">
        <title>Assembly of the Candida albicans genome into sixteen supercontigs aligned on the eight chromosomes.</title>
        <authorList>
            <person name="van het Hoog M."/>
            <person name="Rast T.J."/>
            <person name="Martchenko M."/>
            <person name="Grindle S."/>
            <person name="Dignard D."/>
            <person name="Hogues H."/>
            <person name="Cuomo C."/>
            <person name="Berriman M."/>
            <person name="Scherer S."/>
            <person name="Magee B.B."/>
            <person name="Whiteway M."/>
            <person name="Chibana H."/>
            <person name="Nantel A."/>
            <person name="Magee P.T."/>
        </authorList>
    </citation>
    <scope>GENOME REANNOTATION</scope>
    <source>
        <strain evidence="12">SC5314 / ATCC MYA-2876</strain>
    </source>
</reference>
<reference evidence="12" key="3">
    <citation type="journal article" date="2013" name="Genome Biol.">
        <title>Assembly of a phased diploid Candida albicans genome facilitates allele-specific measurements and provides a simple model for repeat and indel structure.</title>
        <authorList>
            <person name="Muzzey D."/>
            <person name="Schwartz K."/>
            <person name="Weissman J.S."/>
            <person name="Sherlock G."/>
        </authorList>
    </citation>
    <scope>NUCLEOTIDE SEQUENCE [LARGE SCALE GENOMIC DNA]</scope>
    <scope>GENOME REANNOTATION</scope>
    <source>
        <strain>SC5314 / ATCC MYA-2876</strain>
    </source>
</reference>
<reference evidence="8" key="4">
    <citation type="journal article" date="1996" name="Yeast">
        <title>Candida albicans phosphatidylinositol synthase has common features with both Saccharomyces cerevisiae and mammalian phosphatidylinositol synthases.</title>
        <authorList>
            <person name="Antonsson B.E."/>
            <person name="Klig L.S."/>
        </authorList>
    </citation>
    <scope>FUNCTION</scope>
    <scope>CATALYTIC ACTIVITY</scope>
    <scope>COFACTOR</scope>
    <scope>ACTIVITY REGULATION</scope>
    <scope>BIOPHYSICOCHEMICAL PROPERTIES</scope>
    <scope>SUBCELLULAR LOCATION</scope>
</reference>
<reference evidence="8" key="5">
    <citation type="journal article" date="2022" name="Fungal Genet. Biol.">
        <title>Function of the phosphatidylinositol synthase Pis1 in maintenance of endoplasmic reticulum function and pathogenicity in Candida albicans.</title>
        <authorList>
            <person name="Liu Y."/>
            <person name="Ma C."/>
            <person name="Mao X."/>
            <person name="Zhao Q."/>
            <person name="Yu D."/>
            <person name="Yang L."/>
            <person name="Li M."/>
        </authorList>
    </citation>
    <scope>FUNCTION</scope>
    <scope>SUBCELLULAR LOCATION</scope>
    <scope>DISRUPTION PHENOTYPE</scope>
</reference>
<sequence>MPSAKSSDLSPTKTNLESTTKQKVSVQDIFLYIPNLIGYLRIITAIISFLCMANHPVATLIFYGISGFLDAFDGYAARKFNQGTRFGAVLDMVTDRCATSSLIVYLGVLYPQYTVFWQILVSLDLSSHYMHMYAMLSAGSTSHKNVDETQSKLLSLYYNNRLVLFFVCLINELFYMAVYLHYYKFFWLGTVMLVASTPIWLFKQIANIIQLKNASLILARMDAHDHSKRD</sequence>
<protein>
    <recommendedName>
        <fullName evidence="3">CDP-diacylglycerol--inositol 3-phosphatidyltransferase</fullName>
        <ecNumber evidence="5">2.7.8.11</ecNumber>
    </recommendedName>
    <alternativeName>
        <fullName evidence="7">Phosphatidylinositol synthase</fullName>
        <shortName evidence="8">PI synthase</shortName>
        <shortName evidence="8">PtdIns synthase</shortName>
    </alternativeName>
</protein>
<comment type="function">
    <text evidence="4 5">Catalyzes the synthesis of phosphatidylinositol (PtdIns) (PubMed:8740418). Required for proper membrane dynamics and cell wall integrity (PubMed:35227874).</text>
</comment>
<comment type="catalytic activity">
    <reaction evidence="5">
        <text>a CDP-1,2-diacyl-sn-glycerol + myo-inositol = a 1,2-diacyl-sn-glycero-3-phospho-(1D-myo-inositol) + CMP + H(+)</text>
        <dbReference type="Rhea" id="RHEA:11580"/>
        <dbReference type="ChEBI" id="CHEBI:15378"/>
        <dbReference type="ChEBI" id="CHEBI:17268"/>
        <dbReference type="ChEBI" id="CHEBI:57880"/>
        <dbReference type="ChEBI" id="CHEBI:58332"/>
        <dbReference type="ChEBI" id="CHEBI:60377"/>
        <dbReference type="EC" id="2.7.8.11"/>
    </reaction>
</comment>
<comment type="cofactor">
    <cofactor evidence="5">
        <name>Mn(2+)</name>
        <dbReference type="ChEBI" id="CHEBI:29035"/>
    </cofactor>
    <cofactor evidence="5">
        <name>Mg(2+)</name>
        <dbReference type="ChEBI" id="CHEBI:18420"/>
    </cofactor>
    <text evidence="5">Catalytic activity is higher with Mg(2+).</text>
</comment>
<comment type="activity regulation">
    <text evidence="5">Inhibited by calcium and zinc ions (PubMed:8740418). Inhibited by nucleoside triphosphates and diphosphates (PubMed:8740418).</text>
</comment>
<comment type="biophysicochemical properties">
    <kinetics>
        <KM evidence="5">0.55 mM for myo-inositol (at pH 9.0 and 37 degrees Celsius)</KM>
        <KM evidence="5">36 uM for CDP-diacylglycerol (at pH 9.0 and 37 degrees Celsius)</KM>
        <KM evidence="5">29 uM for 2-deoxy-CDP-diacylglycerol (at pH 9.0 and 37 degrees Celsius)</KM>
    </kinetics>
    <phDependence>
        <text evidence="5">Optimum pH is 8-9.5.</text>
    </phDependence>
    <temperatureDependence>
        <text evidence="5">Optimum temperature is 55 degrees Celsius.</text>
    </temperatureDependence>
</comment>
<comment type="subcellular location">
    <subcellularLocation>
        <location evidence="4 9">Endoplasmic reticulum membrane</location>
        <topology evidence="2">Multi-pass membrane protein</topology>
    </subcellularLocation>
</comment>
<comment type="disruption phenotype">
    <text evidence="4">Growth defect.</text>
</comment>
<comment type="similarity">
    <text evidence="8">Belongs to the CDP-alcohol phosphatidyltransferase class-I family.</text>
</comment>
<accession>Q59RA2</accession>
<gene>
    <name evidence="6" type="primary">PIS1</name>
    <name evidence="10" type="ordered locus">orf19.6860</name>
    <name evidence="11" type="ORF">CAALFM_C405210WA</name>
</gene>